<dbReference type="EMBL" id="AAAB01008980">
    <property type="protein sequence ID" value="EAL39227.3"/>
    <property type="molecule type" value="Genomic_DNA"/>
</dbReference>
<dbReference type="RefSeq" id="XP_553774.3">
    <property type="nucleotide sequence ID" value="XM_553774.3"/>
</dbReference>
<dbReference type="SMR" id="Q5TP13"/>
<dbReference type="FunCoup" id="Q5TP13">
    <property type="interactions" value="1936"/>
</dbReference>
<dbReference type="STRING" id="7165.Q5TP13"/>
<dbReference type="PaxDb" id="7165-AGAP009886-PA"/>
<dbReference type="VEuPathDB" id="VectorBase:AGAMI1_012768"/>
<dbReference type="VEuPathDB" id="VectorBase:AGAP009886"/>
<dbReference type="eggNOG" id="KOG4274">
    <property type="taxonomic scope" value="Eukaryota"/>
</dbReference>
<dbReference type="HOGENOM" id="CLU_011336_0_0_1"/>
<dbReference type="InParanoid" id="Q5TP13"/>
<dbReference type="OMA" id="GPVPNQM"/>
<dbReference type="PhylomeDB" id="Q5TP13"/>
<dbReference type="Proteomes" id="UP000007062">
    <property type="component" value="Chromosome 3R"/>
</dbReference>
<dbReference type="GO" id="GO:0070847">
    <property type="term" value="C:core mediator complex"/>
    <property type="evidence" value="ECO:0000318"/>
    <property type="project" value="GO_Central"/>
</dbReference>
<dbReference type="GO" id="GO:0003712">
    <property type="term" value="F:transcription coregulator activity"/>
    <property type="evidence" value="ECO:0007669"/>
    <property type="project" value="InterPro"/>
</dbReference>
<dbReference type="GO" id="GO:0006355">
    <property type="term" value="P:regulation of DNA-templated transcription"/>
    <property type="evidence" value="ECO:0007669"/>
    <property type="project" value="InterPro"/>
</dbReference>
<dbReference type="FunFam" id="1.10.246.20:FF:000002">
    <property type="entry name" value="Mediator of RNA polymerase II transcription subunit 15"/>
    <property type="match status" value="1"/>
</dbReference>
<dbReference type="Gene3D" id="1.10.246.20">
    <property type="entry name" value="Coactivator CBP, KIX domain"/>
    <property type="match status" value="1"/>
</dbReference>
<dbReference type="InterPro" id="IPR036529">
    <property type="entry name" value="KIX_dom_sf"/>
</dbReference>
<dbReference type="InterPro" id="IPR048386">
    <property type="entry name" value="Med15_C"/>
</dbReference>
<dbReference type="InterPro" id="IPR048385">
    <property type="entry name" value="Med15_central"/>
</dbReference>
<dbReference type="InterPro" id="IPR019087">
    <property type="entry name" value="Med15_N"/>
</dbReference>
<dbReference type="PANTHER" id="PTHR31804">
    <property type="entry name" value="MEDIATOR OF RNA POLYMERASE II TRANSCRIPTION SUBUNIT 15"/>
    <property type="match status" value="1"/>
</dbReference>
<dbReference type="PANTHER" id="PTHR31804:SF3">
    <property type="entry name" value="MEDIATOR OF RNA POLYMERASE II TRANSCRIPTION SUBUNIT 15"/>
    <property type="match status" value="1"/>
</dbReference>
<dbReference type="Pfam" id="PF21539">
    <property type="entry name" value="Med15_C"/>
    <property type="match status" value="1"/>
</dbReference>
<dbReference type="Pfam" id="PF21538">
    <property type="entry name" value="Med15_M"/>
    <property type="match status" value="1"/>
</dbReference>
<dbReference type="Pfam" id="PF09606">
    <property type="entry name" value="Med15_N"/>
    <property type="match status" value="1"/>
</dbReference>
<protein>
    <recommendedName>
        <fullName>Mediator of RNA polymerase II transcription subunit 15</fullName>
    </recommendedName>
    <alternativeName>
        <fullName>Mediator complex subunit 15</fullName>
    </alternativeName>
</protein>
<name>MED15_ANOGA</name>
<proteinExistence type="inferred from homology"/>
<keyword id="KW-0010">Activator</keyword>
<keyword id="KW-0539">Nucleus</keyword>
<keyword id="KW-1185">Reference proteome</keyword>
<keyword id="KW-0804">Transcription</keyword>
<keyword id="KW-0805">Transcription regulation</keyword>
<organism>
    <name type="scientific">Anopheles gambiae</name>
    <name type="common">African malaria mosquito</name>
    <dbReference type="NCBI Taxonomy" id="7165"/>
    <lineage>
        <taxon>Eukaryota</taxon>
        <taxon>Metazoa</taxon>
        <taxon>Ecdysozoa</taxon>
        <taxon>Arthropoda</taxon>
        <taxon>Hexapoda</taxon>
        <taxon>Insecta</taxon>
        <taxon>Pterygota</taxon>
        <taxon>Neoptera</taxon>
        <taxon>Endopterygota</taxon>
        <taxon>Diptera</taxon>
        <taxon>Nematocera</taxon>
        <taxon>Culicoidea</taxon>
        <taxon>Culicidae</taxon>
        <taxon>Anophelinae</taxon>
        <taxon>Anopheles</taxon>
    </lineage>
</organism>
<sequence length="762" mass="78119">MAEDNSWKTSNFRQSVVNKINEAIQQTGMTSSKNGIEMENHVFHKARNKDEYLGFVARLILHVREMTAAAQQAQQDGGGNSSQQGGGGGGGGSGMPDPINALQNLASQGTRPQMMGQMGVGPGGPMGGQMGGAGQASNLLHSLRPQMQMGGMGGPMQGNRVGMGPGNQMGGMMGGPNQMQGPGAGMVGGMPGQMGVGMGPGGMSGGKIQMGVGPGGPNQMNPMVMGQIQAQLQNQNAMGGQQMGTVGGTMNAGNQMGQMVGANAGMNPQAMGMASNQVVRQQQLQQQGMGQVQMGLGPGQMGQLSAGVQGGVGHGGPAMQQQQQAGGMGPGAGPNQMNPGVAMGPGGVVGPAGGGGVMGPGPNQMLGAGGAGGPGAGQQGNFVGMGANAMVRKPPEMMPGGNVYPGSGGAVRSVTPNNFLRQSPSPSVPSPVGPGAHGPPSHPGQMIPSPALIPSPNPHMGGVAQRSTIGQSPGGSLNTPGQPGGAVPSPLNPQDEQLYREKYRALTKYIEPLKRMIAKMENDDIDKIAKMKRLLEILSNPSVRIPLETLHKCEAALTSQLGSIRETPTNNPLVEAVSSSLQAATGNHTLQRTFRPCLEALFGPDIKNLPPPAKQSRLALDDTGAAVGTGGGEIPHILQGEIARLDQKFKVSLDQCAISGTRTIKLICWLDDKNLPCVPPVAVTIPEDYPSTAPSCSLIEQEYNATPFLILVQKSLMARICKLPGLFTLSHLLDTWEMSVRQACSPNPTIVAPTGTSVLLGM</sequence>
<comment type="function">
    <text evidence="1">Component of the Mediator complex, a coactivator involved in the regulated transcription of nearly all RNA polymerase II-dependent genes. Mediator functions as a bridge to convey information from gene-specific regulatory proteins to the basal RNA polymerase II transcription machinery. Mediator is recruited to promoters by direct interactions with regulatory proteins and serves as a scaffold for the assembly of a functional preinitiation complex with RNA polymerase II and the general transcription factors (By similarity).</text>
</comment>
<comment type="subunit">
    <text evidence="1">Component of the Mediator complex.</text>
</comment>
<comment type="subcellular location">
    <subcellularLocation>
        <location evidence="1">Nucleus</location>
    </subcellularLocation>
</comment>
<comment type="similarity">
    <text evidence="3">Belongs to the Mediator complex subunit 15 family.</text>
</comment>
<feature type="chain" id="PRO_0000304667" description="Mediator of RNA polymerase II transcription subunit 15">
    <location>
        <begin position="1"/>
        <end position="762"/>
    </location>
</feature>
<feature type="region of interest" description="Disordered" evidence="2">
    <location>
        <begin position="70"/>
        <end position="102"/>
    </location>
</feature>
<feature type="region of interest" description="Disordered" evidence="2">
    <location>
        <begin position="311"/>
        <end position="330"/>
    </location>
</feature>
<feature type="region of interest" description="Disordered" evidence="2">
    <location>
        <begin position="406"/>
        <end position="494"/>
    </location>
</feature>
<feature type="compositionally biased region" description="Gly residues" evidence="2">
    <location>
        <begin position="76"/>
        <end position="94"/>
    </location>
</feature>
<feature type="compositionally biased region" description="Polar residues" evidence="2">
    <location>
        <begin position="465"/>
        <end position="481"/>
    </location>
</feature>
<accession>Q5TP13</accession>
<reference key="1">
    <citation type="journal article" date="2002" name="Science">
        <title>The genome sequence of the malaria mosquito Anopheles gambiae.</title>
        <authorList>
            <person name="Holt R.A."/>
            <person name="Subramanian G.M."/>
            <person name="Halpern A."/>
            <person name="Sutton G.G."/>
            <person name="Charlab R."/>
            <person name="Nusskern D.R."/>
            <person name="Wincker P."/>
            <person name="Clark A.G."/>
            <person name="Ribeiro J.M.C."/>
            <person name="Wides R."/>
            <person name="Salzberg S.L."/>
            <person name="Loftus B.J."/>
            <person name="Yandell M.D."/>
            <person name="Majoros W.H."/>
            <person name="Rusch D.B."/>
            <person name="Lai Z."/>
            <person name="Kraft C.L."/>
            <person name="Abril J.F."/>
            <person name="Anthouard V."/>
            <person name="Arensburger P."/>
            <person name="Atkinson P.W."/>
            <person name="Baden H."/>
            <person name="de Berardinis V."/>
            <person name="Baldwin D."/>
            <person name="Benes V."/>
            <person name="Biedler J."/>
            <person name="Blass C."/>
            <person name="Bolanos R."/>
            <person name="Boscus D."/>
            <person name="Barnstead M."/>
            <person name="Cai S."/>
            <person name="Center A."/>
            <person name="Chaturverdi K."/>
            <person name="Christophides G.K."/>
            <person name="Chrystal M.A.M."/>
            <person name="Clamp M."/>
            <person name="Cravchik A."/>
            <person name="Curwen V."/>
            <person name="Dana A."/>
            <person name="Delcher A."/>
            <person name="Dew I."/>
            <person name="Evans C.A."/>
            <person name="Flanigan M."/>
            <person name="Grundschober-Freimoser A."/>
            <person name="Friedli L."/>
            <person name="Gu Z."/>
            <person name="Guan P."/>
            <person name="Guigo R."/>
            <person name="Hillenmeyer M.E."/>
            <person name="Hladun S.L."/>
            <person name="Hogan J.R."/>
            <person name="Hong Y.S."/>
            <person name="Hoover J."/>
            <person name="Jaillon O."/>
            <person name="Ke Z."/>
            <person name="Kodira C.D."/>
            <person name="Kokoza E."/>
            <person name="Koutsos A."/>
            <person name="Letunic I."/>
            <person name="Levitsky A.A."/>
            <person name="Liang Y."/>
            <person name="Lin J.-J."/>
            <person name="Lobo N.F."/>
            <person name="Lopez J.R."/>
            <person name="Malek J.A."/>
            <person name="McIntosh T.C."/>
            <person name="Meister S."/>
            <person name="Miller J.R."/>
            <person name="Mobarry C."/>
            <person name="Mongin E."/>
            <person name="Murphy S.D."/>
            <person name="O'Brochta D.A."/>
            <person name="Pfannkoch C."/>
            <person name="Qi R."/>
            <person name="Regier M.A."/>
            <person name="Remington K."/>
            <person name="Shao H."/>
            <person name="Sharakhova M.V."/>
            <person name="Sitter C.D."/>
            <person name="Shetty J."/>
            <person name="Smith T.J."/>
            <person name="Strong R."/>
            <person name="Sun J."/>
            <person name="Thomasova D."/>
            <person name="Ton L.Q."/>
            <person name="Topalis P."/>
            <person name="Tu Z.J."/>
            <person name="Unger M.F."/>
            <person name="Walenz B."/>
            <person name="Wang A.H."/>
            <person name="Wang J."/>
            <person name="Wang M."/>
            <person name="Wang X."/>
            <person name="Woodford K.J."/>
            <person name="Wortman J.R."/>
            <person name="Wu M."/>
            <person name="Yao A."/>
            <person name="Zdobnov E.M."/>
            <person name="Zhang H."/>
            <person name="Zhao Q."/>
            <person name="Zhao S."/>
            <person name="Zhu S.C."/>
            <person name="Zhimulev I."/>
            <person name="Coluzzi M."/>
            <person name="della Torre A."/>
            <person name="Roth C.W."/>
            <person name="Louis C."/>
            <person name="Kalush F."/>
            <person name="Mural R.J."/>
            <person name="Myers E.W."/>
            <person name="Adams M.D."/>
            <person name="Smith H.O."/>
            <person name="Broder S."/>
            <person name="Gardner M.J."/>
            <person name="Fraser C.M."/>
            <person name="Birney E."/>
            <person name="Bork P."/>
            <person name="Brey P.T."/>
            <person name="Venter J.C."/>
            <person name="Weissenbach J."/>
            <person name="Kafatos F.C."/>
            <person name="Collins F.H."/>
            <person name="Hoffman S.L."/>
        </authorList>
    </citation>
    <scope>NUCLEOTIDE SEQUENCE [LARGE SCALE GENOMIC DNA]</scope>
    <source>
        <strain>PEST</strain>
    </source>
</reference>
<gene>
    <name type="primary">MED15</name>
    <name type="ORF">AGAP009886</name>
</gene>
<evidence type="ECO:0000250" key="1"/>
<evidence type="ECO:0000256" key="2">
    <source>
        <dbReference type="SAM" id="MobiDB-lite"/>
    </source>
</evidence>
<evidence type="ECO:0000305" key="3"/>